<dbReference type="EMBL" id="DP000021">
    <property type="protein sequence ID" value="ABB89810.1"/>
    <property type="molecule type" value="Genomic_DNA"/>
</dbReference>
<dbReference type="RefSeq" id="NP_001162160.1">
    <property type="nucleotide sequence ID" value="NM_001168689.1"/>
</dbReference>
<dbReference type="SMR" id="Q2QL99"/>
<dbReference type="FunCoup" id="Q2QL99">
    <property type="interactions" value="1489"/>
</dbReference>
<dbReference type="STRING" id="13616.ENSMODP00000056737"/>
<dbReference type="Ensembl" id="ENSMODT00000054235.1">
    <property type="protein sequence ID" value="ENSMODP00000056737.1"/>
    <property type="gene ID" value="ENSMODG00000041408.1"/>
</dbReference>
<dbReference type="GeneID" id="780952"/>
<dbReference type="KEGG" id="mdo:780952"/>
<dbReference type="CTD" id="830"/>
<dbReference type="eggNOG" id="KOG0836">
    <property type="taxonomic scope" value="Eukaryota"/>
</dbReference>
<dbReference type="GeneTree" id="ENSGT00950000183119"/>
<dbReference type="HOGENOM" id="CLU_045161_0_0_1"/>
<dbReference type="InParanoid" id="Q2QL99"/>
<dbReference type="OMA" id="VACIEDH"/>
<dbReference type="OrthoDB" id="340550at2759"/>
<dbReference type="TreeFam" id="TF314822"/>
<dbReference type="Proteomes" id="UP000002280">
    <property type="component" value="Chromosome 8"/>
</dbReference>
<dbReference type="Bgee" id="ENSMODG00000041408">
    <property type="expression patterns" value="Expressed in skeletal muscle tissue and 21 other cell types or tissues"/>
</dbReference>
<dbReference type="GO" id="GO:0005903">
    <property type="term" value="C:brush border"/>
    <property type="evidence" value="ECO:0007669"/>
    <property type="project" value="Ensembl"/>
</dbReference>
<dbReference type="GO" id="GO:0030863">
    <property type="term" value="C:cortical cytoskeleton"/>
    <property type="evidence" value="ECO:0000318"/>
    <property type="project" value="GO_Central"/>
</dbReference>
<dbReference type="GO" id="GO:0008290">
    <property type="term" value="C:F-actin capping protein complex"/>
    <property type="evidence" value="ECO:0000318"/>
    <property type="project" value="GO_Central"/>
</dbReference>
<dbReference type="GO" id="GO:0016020">
    <property type="term" value="C:membrane"/>
    <property type="evidence" value="ECO:0007669"/>
    <property type="project" value="Ensembl"/>
</dbReference>
<dbReference type="GO" id="GO:0051015">
    <property type="term" value="F:actin filament binding"/>
    <property type="evidence" value="ECO:0000318"/>
    <property type="project" value="GO_Central"/>
</dbReference>
<dbReference type="GO" id="GO:0030036">
    <property type="term" value="P:actin cytoskeleton organization"/>
    <property type="evidence" value="ECO:0000318"/>
    <property type="project" value="GO_Central"/>
</dbReference>
<dbReference type="GO" id="GO:0051016">
    <property type="term" value="P:barbed-end actin filament capping"/>
    <property type="evidence" value="ECO:0000318"/>
    <property type="project" value="GO_Central"/>
</dbReference>
<dbReference type="FunFam" id="3.30.1140.60:FF:000001">
    <property type="entry name" value="F-actin-capping protein subunit alpha"/>
    <property type="match status" value="1"/>
</dbReference>
<dbReference type="FunFam" id="3.90.1150.210:FF:000002">
    <property type="entry name" value="F-actin-capping protein subunit alpha"/>
    <property type="match status" value="1"/>
</dbReference>
<dbReference type="Gene3D" id="3.30.1140.60">
    <property type="entry name" value="F-actin capping protein, alpha subunit"/>
    <property type="match status" value="1"/>
</dbReference>
<dbReference type="Gene3D" id="3.90.1150.210">
    <property type="entry name" value="F-actin capping protein, beta subunit"/>
    <property type="match status" value="1"/>
</dbReference>
<dbReference type="InterPro" id="IPR002189">
    <property type="entry name" value="CapZ_alpha"/>
</dbReference>
<dbReference type="InterPro" id="IPR037282">
    <property type="entry name" value="CapZ_alpha/beta"/>
</dbReference>
<dbReference type="InterPro" id="IPR042276">
    <property type="entry name" value="CapZ_alpha/beta_2"/>
</dbReference>
<dbReference type="InterPro" id="IPR042489">
    <property type="entry name" value="CapZ_alpha_1"/>
</dbReference>
<dbReference type="InterPro" id="IPR017865">
    <property type="entry name" value="F-actin_cap_asu_CS"/>
</dbReference>
<dbReference type="PANTHER" id="PTHR10653">
    <property type="entry name" value="F-ACTIN-CAPPING PROTEIN SUBUNIT ALPHA"/>
    <property type="match status" value="1"/>
</dbReference>
<dbReference type="PANTHER" id="PTHR10653:SF2">
    <property type="entry name" value="F-ACTIN-CAPPING PROTEIN SUBUNIT ALPHA-2"/>
    <property type="match status" value="1"/>
</dbReference>
<dbReference type="Pfam" id="PF01267">
    <property type="entry name" value="F-actin_cap_A"/>
    <property type="match status" value="1"/>
</dbReference>
<dbReference type="PRINTS" id="PR00191">
    <property type="entry name" value="FACTINCAPA"/>
</dbReference>
<dbReference type="SUPFAM" id="SSF90096">
    <property type="entry name" value="Subunits of heterodimeric actin filament capping protein Capz"/>
    <property type="match status" value="1"/>
</dbReference>
<dbReference type="PROSITE" id="PS00748">
    <property type="entry name" value="F_ACTIN_CAPPING_A_1"/>
    <property type="match status" value="1"/>
</dbReference>
<dbReference type="PROSITE" id="PS00749">
    <property type="entry name" value="F_ACTIN_CAPPING_A_2"/>
    <property type="match status" value="1"/>
</dbReference>
<sequence>MADLEEQLSDEEKVRIAAKFIIHAPPGEFNEVFNDVRLLLNNDNLLREGAAHAFAQYNLDQFTPVKIEGYEEQVLITEHGDLGNGKFLDPKNRVSFKFDHLRKEATDPRPYEGENAIESWRHSVETAMRAYVKEHYPNGVCTVYGKTIDGQQTIIACIESHQFQAKNFWNGRWRSEWKFTITPSTTQVVGILKIQVHYYEDGNVQLVSHKDIQDSLTVSNEVQTAKEFIKIVEAAENEYQTAISENYQTMSDTTFKALRRQLPVTRTKIDWNKILSYKIGKEMQNA</sequence>
<organism>
    <name type="scientific">Monodelphis domestica</name>
    <name type="common">Gray short-tailed opossum</name>
    <dbReference type="NCBI Taxonomy" id="13616"/>
    <lineage>
        <taxon>Eukaryota</taxon>
        <taxon>Metazoa</taxon>
        <taxon>Chordata</taxon>
        <taxon>Craniata</taxon>
        <taxon>Vertebrata</taxon>
        <taxon>Euteleostomi</taxon>
        <taxon>Mammalia</taxon>
        <taxon>Metatheria</taxon>
        <taxon>Didelphimorphia</taxon>
        <taxon>Didelphidae</taxon>
        <taxon>Monodelphis</taxon>
    </lineage>
</organism>
<keyword id="KW-0007">Acetylation</keyword>
<keyword id="KW-0117">Actin capping</keyword>
<keyword id="KW-0009">Actin-binding</keyword>
<keyword id="KW-0597">Phosphoprotein</keyword>
<keyword id="KW-1185">Reference proteome</keyword>
<reference key="1">
    <citation type="submission" date="2005-03" db="EMBL/GenBank/DDBJ databases">
        <title>NISC comparative sequencing initiative.</title>
        <authorList>
            <person name="Antonellis A."/>
            <person name="Ayele K."/>
            <person name="Benjamin B."/>
            <person name="Blakesley R.W."/>
            <person name="Boakye A."/>
            <person name="Bouffard G.G."/>
            <person name="Brinkley C."/>
            <person name="Brooks S."/>
            <person name="Chu G."/>
            <person name="Coleman H."/>
            <person name="Engle J."/>
            <person name="Gestole M."/>
            <person name="Greene A."/>
            <person name="Guan X."/>
            <person name="Gupta J."/>
            <person name="Haghighi P."/>
            <person name="Han J."/>
            <person name="Hansen N."/>
            <person name="Ho S.-L."/>
            <person name="Hu P."/>
            <person name="Hunter G."/>
            <person name="Hurle B."/>
            <person name="Idol J.R."/>
            <person name="Kwong P."/>
            <person name="Laric P."/>
            <person name="Larson S."/>
            <person name="Lee-Lin S.-Q."/>
            <person name="Legaspi R."/>
            <person name="Madden M."/>
            <person name="Maduro Q.L."/>
            <person name="Maduro V.B."/>
            <person name="Margulies E.H."/>
            <person name="Masiello C."/>
            <person name="Maskeri B."/>
            <person name="McDowell J."/>
            <person name="Mojidi H.A."/>
            <person name="Mullikin J.C."/>
            <person name="Oestreicher J.S."/>
            <person name="Park M."/>
            <person name="Portnoy M.E."/>
            <person name="Prasad A."/>
            <person name="Puri O."/>
            <person name="Reddix-Dugue N."/>
            <person name="Schandler K."/>
            <person name="Schueler M.G."/>
            <person name="Sison C."/>
            <person name="Stantripop S."/>
            <person name="Stephen E."/>
            <person name="Taye A."/>
            <person name="Thomas J.W."/>
            <person name="Thomas P.J."/>
            <person name="Tsipouri V."/>
            <person name="Ung L."/>
            <person name="Vogt J.L."/>
            <person name="Wetherby K.D."/>
            <person name="Young A."/>
            <person name="Green E.D."/>
        </authorList>
    </citation>
    <scope>NUCLEOTIDE SEQUENCE [LARGE SCALE GENOMIC DNA]</scope>
</reference>
<name>CAZA2_MONDO</name>
<comment type="function">
    <text evidence="1">F-actin-capping proteins bind in a Ca(2+)-independent manner to the fast growing ends of actin filaments (barbed end) thereby blocking the exchange of subunits at these ends. Unlike other capping proteins (such as gelsolin and severin), these proteins do not sever actin filaments (By similarity).</text>
</comment>
<comment type="subunit">
    <text evidence="1 2">Component of the F-actin capping complex, composed of a heterodimer of an alpha and a beta subunit. Component of the WASH complex, composed of F-actin-capping protein subunit alpha (CAPZA1, CAPZA2 or CAPZA3), F-actin-capping protein subunit beta (CAPZB), WASHC1, WASHC2, WASHC3, WASHC4 and WASHC5. Interacts with RCSD1/CAPZIP (By similarity). Directly interacts with CRACD; this interaction decreases binding to actin (By similarity).</text>
</comment>
<comment type="similarity">
    <text evidence="3">Belongs to the F-actin-capping protein alpha subunit family.</text>
</comment>
<accession>Q2QL99</accession>
<gene>
    <name type="primary">CAPZA2</name>
</gene>
<evidence type="ECO:0000250" key="1"/>
<evidence type="ECO:0000250" key="2">
    <source>
        <dbReference type="UniProtKB" id="P47755"/>
    </source>
</evidence>
<evidence type="ECO:0000305" key="3"/>
<protein>
    <recommendedName>
        <fullName>F-actin-capping protein subunit alpha-2</fullName>
    </recommendedName>
    <alternativeName>
        <fullName>CapZ alpha-2</fullName>
    </alternativeName>
</protein>
<proteinExistence type="inferred from homology"/>
<feature type="initiator methionine" description="Removed" evidence="2">
    <location>
        <position position="1"/>
    </location>
</feature>
<feature type="chain" id="PRO_0000226309" description="F-actin-capping protein subunit alpha-2">
    <location>
        <begin position="2"/>
        <end position="286"/>
    </location>
</feature>
<feature type="modified residue" description="N-acetylalanine" evidence="2">
    <location>
        <position position="2"/>
    </location>
</feature>
<feature type="modified residue" description="Phosphoserine" evidence="2">
    <location>
        <position position="9"/>
    </location>
</feature>